<reference key="1">
    <citation type="journal article" date="2009" name="PLoS Genet.">
        <title>Organised genome dynamics in the Escherichia coli species results in highly diverse adaptive paths.</title>
        <authorList>
            <person name="Touchon M."/>
            <person name="Hoede C."/>
            <person name="Tenaillon O."/>
            <person name="Barbe V."/>
            <person name="Baeriswyl S."/>
            <person name="Bidet P."/>
            <person name="Bingen E."/>
            <person name="Bonacorsi S."/>
            <person name="Bouchier C."/>
            <person name="Bouvet O."/>
            <person name="Calteau A."/>
            <person name="Chiapello H."/>
            <person name="Clermont O."/>
            <person name="Cruveiller S."/>
            <person name="Danchin A."/>
            <person name="Diard M."/>
            <person name="Dossat C."/>
            <person name="Karoui M.E."/>
            <person name="Frapy E."/>
            <person name="Garry L."/>
            <person name="Ghigo J.M."/>
            <person name="Gilles A.M."/>
            <person name="Johnson J."/>
            <person name="Le Bouguenec C."/>
            <person name="Lescat M."/>
            <person name="Mangenot S."/>
            <person name="Martinez-Jehanne V."/>
            <person name="Matic I."/>
            <person name="Nassif X."/>
            <person name="Oztas S."/>
            <person name="Petit M.A."/>
            <person name="Pichon C."/>
            <person name="Rouy Z."/>
            <person name="Ruf C.S."/>
            <person name="Schneider D."/>
            <person name="Tourret J."/>
            <person name="Vacherie B."/>
            <person name="Vallenet D."/>
            <person name="Medigue C."/>
            <person name="Rocha E.P.C."/>
            <person name="Denamur E."/>
        </authorList>
    </citation>
    <scope>NUCLEOTIDE SEQUENCE [LARGE SCALE GENOMIC DNA]</scope>
    <source>
        <strain>IAI1</strain>
    </source>
</reference>
<keyword id="KW-0963">Cytoplasm</keyword>
<keyword id="KW-0413">Isomerase</keyword>
<keyword id="KW-0464">Manganese</keyword>
<keyword id="KW-0479">Metal-binding</keyword>
<keyword id="KW-0684">Rhamnose metabolism</keyword>
<protein>
    <recommendedName>
        <fullName evidence="1">L-rhamnose isomerase</fullName>
        <ecNumber evidence="1">5.3.1.14</ecNumber>
    </recommendedName>
</protein>
<name>RHAA_ECO8A</name>
<sequence>MTTQLEQAWELAKQRFAAVGIDVEEALRQLDRLPVSMHCWQGDDVSGFENPEGSLTGGIQATGNYPGKARNASELRTDLEQAMRLIPGPKRLNLHAIYLESDTPVSRDQIKPEHFKNWVEWAKANQLGLDFNPSCFSHPLSADGFTLSHADDSIRQFWIDHCKASRRVSAYFGEQLGTPSVMNIWIPDGMKDITVDRLAPRQRLLAALDEVISEKLNPAHHIDAVESKLFGIGAESYTVGSNEFYMGYATSRQTALCLDAGHFHPTEVISDKISAAMLYVPQLLLHVSRPVRWDSDHVVLLDDETQAIASEIVRHDLFDRVHIGLDFFDASINRIAAWVIGTRNMKKALLRALLEPTAELRKLEAAGDYTARLALLEEQKSLPWQAVWEMYCQRHDTPTGSEWLESVRAYEKAILSQRG</sequence>
<organism>
    <name type="scientific">Escherichia coli O8 (strain IAI1)</name>
    <dbReference type="NCBI Taxonomy" id="585034"/>
    <lineage>
        <taxon>Bacteria</taxon>
        <taxon>Pseudomonadati</taxon>
        <taxon>Pseudomonadota</taxon>
        <taxon>Gammaproteobacteria</taxon>
        <taxon>Enterobacterales</taxon>
        <taxon>Enterobacteriaceae</taxon>
        <taxon>Escherichia</taxon>
    </lineage>
</organism>
<comment type="function">
    <text evidence="1">Catalyzes the interconversion of L-rhamnose and L-rhamnulose.</text>
</comment>
<comment type="catalytic activity">
    <reaction evidence="1">
        <text>L-rhamnopyranose = L-rhamnulose</text>
        <dbReference type="Rhea" id="RHEA:23160"/>
        <dbReference type="ChEBI" id="CHEBI:17897"/>
        <dbReference type="ChEBI" id="CHEBI:62346"/>
        <dbReference type="EC" id="5.3.1.14"/>
    </reaction>
</comment>
<comment type="cofactor">
    <cofactor evidence="1">
        <name>Mn(2+)</name>
        <dbReference type="ChEBI" id="CHEBI:29035"/>
    </cofactor>
    <text evidence="1">Binds 1 Mn(2+) ion per subunit.</text>
</comment>
<comment type="pathway">
    <text evidence="1">Carbohydrate degradation; L-rhamnose degradation; glycerone phosphate from L-rhamnose: step 1/3.</text>
</comment>
<comment type="subunit">
    <text evidence="1">Homotetramer.</text>
</comment>
<comment type="subcellular location">
    <subcellularLocation>
        <location evidence="1">Cytoplasm</location>
    </subcellularLocation>
</comment>
<comment type="similarity">
    <text evidence="1">Belongs to the rhamnose isomerase family.</text>
</comment>
<dbReference type="EC" id="5.3.1.14" evidence="1"/>
<dbReference type="EMBL" id="CU928160">
    <property type="protein sequence ID" value="CAR00879.1"/>
    <property type="molecule type" value="Genomic_DNA"/>
</dbReference>
<dbReference type="RefSeq" id="WP_001325794.1">
    <property type="nucleotide sequence ID" value="NC_011741.1"/>
</dbReference>
<dbReference type="SMR" id="B7M6V5"/>
<dbReference type="GeneID" id="75204577"/>
<dbReference type="KEGG" id="ecr:ECIAI1_4108"/>
<dbReference type="HOGENOM" id="CLU_052790_0_0_6"/>
<dbReference type="UniPathway" id="UPA00541">
    <property type="reaction ID" value="UER00601"/>
</dbReference>
<dbReference type="GO" id="GO:0005737">
    <property type="term" value="C:cytoplasm"/>
    <property type="evidence" value="ECO:0007669"/>
    <property type="project" value="UniProtKB-SubCell"/>
</dbReference>
<dbReference type="GO" id="GO:0008740">
    <property type="term" value="F:L-rhamnose isomerase activity"/>
    <property type="evidence" value="ECO:0007669"/>
    <property type="project" value="UniProtKB-UniRule"/>
</dbReference>
<dbReference type="GO" id="GO:0030145">
    <property type="term" value="F:manganese ion binding"/>
    <property type="evidence" value="ECO:0007669"/>
    <property type="project" value="UniProtKB-UniRule"/>
</dbReference>
<dbReference type="GO" id="GO:0019324">
    <property type="term" value="P:L-lyxose metabolic process"/>
    <property type="evidence" value="ECO:0007669"/>
    <property type="project" value="TreeGrafter"/>
</dbReference>
<dbReference type="GO" id="GO:0019301">
    <property type="term" value="P:rhamnose catabolic process"/>
    <property type="evidence" value="ECO:0007669"/>
    <property type="project" value="UniProtKB-UniRule"/>
</dbReference>
<dbReference type="FunFam" id="3.20.20.150:FF:000006">
    <property type="entry name" value="L-rhamnose isomerase"/>
    <property type="match status" value="1"/>
</dbReference>
<dbReference type="Gene3D" id="3.20.20.150">
    <property type="entry name" value="Divalent-metal-dependent TIM barrel enzymes"/>
    <property type="match status" value="1"/>
</dbReference>
<dbReference type="HAMAP" id="MF_00541">
    <property type="entry name" value="RhaA"/>
    <property type="match status" value="1"/>
</dbReference>
<dbReference type="InterPro" id="IPR050337">
    <property type="entry name" value="L-rhamnose_isomerase"/>
</dbReference>
<dbReference type="InterPro" id="IPR009308">
    <property type="entry name" value="Rhamnose_isomerase"/>
</dbReference>
<dbReference type="InterPro" id="IPR036237">
    <property type="entry name" value="Xyl_isomerase-like_sf"/>
</dbReference>
<dbReference type="NCBIfam" id="NF002203">
    <property type="entry name" value="PRK01076.1"/>
    <property type="match status" value="1"/>
</dbReference>
<dbReference type="NCBIfam" id="TIGR01748">
    <property type="entry name" value="rhaA"/>
    <property type="match status" value="1"/>
</dbReference>
<dbReference type="PANTHER" id="PTHR30268">
    <property type="entry name" value="L-RHAMNOSE ISOMERASE"/>
    <property type="match status" value="1"/>
</dbReference>
<dbReference type="PANTHER" id="PTHR30268:SF0">
    <property type="entry name" value="L-RHAMNOSE ISOMERASE"/>
    <property type="match status" value="1"/>
</dbReference>
<dbReference type="Pfam" id="PF06134">
    <property type="entry name" value="RhaA"/>
    <property type="match status" value="1"/>
</dbReference>
<dbReference type="SUPFAM" id="SSF51658">
    <property type="entry name" value="Xylose isomerase-like"/>
    <property type="match status" value="1"/>
</dbReference>
<proteinExistence type="inferred from homology"/>
<gene>
    <name evidence="1" type="primary">rhaA</name>
    <name type="ordered locus">ECIAI1_4108</name>
</gene>
<evidence type="ECO:0000255" key="1">
    <source>
        <dbReference type="HAMAP-Rule" id="MF_00541"/>
    </source>
</evidence>
<feature type="chain" id="PRO_1000128879" description="L-rhamnose isomerase">
    <location>
        <begin position="1"/>
        <end position="419"/>
    </location>
</feature>
<feature type="binding site" evidence="1">
    <location>
        <position position="262"/>
    </location>
    <ligand>
        <name>Mn(2+)</name>
        <dbReference type="ChEBI" id="CHEBI:29035"/>
    </ligand>
</feature>
<feature type="binding site" evidence="1">
    <location>
        <position position="294"/>
    </location>
    <ligand>
        <name>Mn(2+)</name>
        <dbReference type="ChEBI" id="CHEBI:29035"/>
    </ligand>
</feature>
<feature type="binding site" evidence="1">
    <location>
        <position position="296"/>
    </location>
    <ligand>
        <name>Mn(2+)</name>
        <dbReference type="ChEBI" id="CHEBI:29035"/>
    </ligand>
</feature>
<accession>B7M6V5</accession>